<accession>S0DQ98</accession>
<accession>G8C422</accession>
<protein>
    <recommendedName>
        <fullName evidence="5">Trans-enoyl reductase fsr4</fullName>
        <ecNumber evidence="7">1.-.-.-</ecNumber>
    </recommendedName>
    <alternativeName>
        <fullName evidence="5">Fusarubin biosynthesis cluster protein 4</fullName>
    </alternativeName>
</protein>
<gene>
    <name evidence="5" type="primary">fsr4</name>
    <name type="ORF">FFUJ_03987</name>
</gene>
<name>FSR4_GIBF5</name>
<reference key="1">
    <citation type="journal article" date="2012" name="Appl. Environ. Microbiol.">
        <title>Biosynthesis of fusarubins accounts for pigmentation of Fusarium fujikuroi perithecia.</title>
        <authorList>
            <person name="Studt L."/>
            <person name="Wiemann P."/>
            <person name="Kleigrewe K."/>
            <person name="Humpf H.U."/>
            <person name="Tudzynski B."/>
        </authorList>
    </citation>
    <scope>NUCLEOTIDE SEQUENCE [GENOMIC DNA]</scope>
    <scope>FUNCTION</scope>
    <scope>INDUCTION</scope>
    <scope>DISRUPTION PHENOTYPE</scope>
    <source>
        <strain>CBS 195.34 / IMI 58289 / NRRL A-6831</strain>
    </source>
</reference>
<reference key="2">
    <citation type="journal article" date="2013" name="PLoS Pathog.">
        <title>Deciphering the cryptic genome: genome-wide analyses of the rice pathogen Fusarium fujikuroi reveal complex regulation of secondary metabolism and novel metabolites.</title>
        <authorList>
            <person name="Wiemann P."/>
            <person name="Sieber C.M.K."/>
            <person name="von Bargen K.W."/>
            <person name="Studt L."/>
            <person name="Niehaus E.-M."/>
            <person name="Espino J.J."/>
            <person name="Huss K."/>
            <person name="Michielse C.B."/>
            <person name="Albermann S."/>
            <person name="Wagner D."/>
            <person name="Bergner S.V."/>
            <person name="Connolly L.R."/>
            <person name="Fischer A."/>
            <person name="Reuter G."/>
            <person name="Kleigrewe K."/>
            <person name="Bald T."/>
            <person name="Wingfield B.D."/>
            <person name="Ophir R."/>
            <person name="Freeman S."/>
            <person name="Hippler M."/>
            <person name="Smith K.M."/>
            <person name="Brown D.W."/>
            <person name="Proctor R.H."/>
            <person name="Muensterkoetter M."/>
            <person name="Freitag M."/>
            <person name="Humpf H.-U."/>
            <person name="Gueldener U."/>
            <person name="Tudzynski B."/>
        </authorList>
    </citation>
    <scope>NUCLEOTIDE SEQUENCE [LARGE SCALE GENOMIC DNA]</scope>
    <scope>FUNCTION</scope>
    <source>
        <strain>CBS 195.34 / IMI 58289 / NRRL A-6831</strain>
    </source>
</reference>
<dbReference type="EC" id="1.-.-.-" evidence="7"/>
<dbReference type="EMBL" id="HE613440">
    <property type="protein sequence ID" value="CCE67073.1"/>
    <property type="molecule type" value="Genomic_DNA"/>
</dbReference>
<dbReference type="EMBL" id="HF679024">
    <property type="protein sequence ID" value="CCT64759.1"/>
    <property type="molecule type" value="Genomic_DNA"/>
</dbReference>
<dbReference type="RefSeq" id="XP_023426840.1">
    <property type="nucleotide sequence ID" value="XM_023572780.1"/>
</dbReference>
<dbReference type="SMR" id="S0DQ98"/>
<dbReference type="STRING" id="1279085.S0DQ98"/>
<dbReference type="GeneID" id="35397468"/>
<dbReference type="VEuPathDB" id="FungiDB:FFUJ_03987"/>
<dbReference type="Proteomes" id="UP000016800">
    <property type="component" value="Chromosome 2"/>
</dbReference>
<dbReference type="GO" id="GO:0000166">
    <property type="term" value="F:nucleotide binding"/>
    <property type="evidence" value="ECO:0007669"/>
    <property type="project" value="UniProtKB-KW"/>
</dbReference>
<dbReference type="GO" id="GO:0016651">
    <property type="term" value="F:oxidoreductase activity, acting on NAD(P)H"/>
    <property type="evidence" value="ECO:0007669"/>
    <property type="project" value="InterPro"/>
</dbReference>
<dbReference type="CDD" id="cd08249">
    <property type="entry name" value="enoyl_reductase_like"/>
    <property type="match status" value="1"/>
</dbReference>
<dbReference type="Gene3D" id="3.90.180.10">
    <property type="entry name" value="Medium-chain alcohol dehydrogenases, catalytic domain"/>
    <property type="match status" value="1"/>
</dbReference>
<dbReference type="Gene3D" id="3.40.50.720">
    <property type="entry name" value="NAD(P)-binding Rossmann-like Domain"/>
    <property type="match status" value="1"/>
</dbReference>
<dbReference type="InterPro" id="IPR013154">
    <property type="entry name" value="ADH-like_N"/>
</dbReference>
<dbReference type="InterPro" id="IPR011032">
    <property type="entry name" value="GroES-like_sf"/>
</dbReference>
<dbReference type="InterPro" id="IPR036291">
    <property type="entry name" value="NAD(P)-bd_dom_sf"/>
</dbReference>
<dbReference type="InterPro" id="IPR020843">
    <property type="entry name" value="PKS_ER"/>
</dbReference>
<dbReference type="InterPro" id="IPR047122">
    <property type="entry name" value="Trans-enoyl_RdTase-like"/>
</dbReference>
<dbReference type="PANTHER" id="PTHR45348">
    <property type="entry name" value="HYPOTHETICAL OXIDOREDUCTASE (EUROFUNG)"/>
    <property type="match status" value="1"/>
</dbReference>
<dbReference type="PANTHER" id="PTHR45348:SF5">
    <property type="entry name" value="OXIDOREDUCTASE, PUTATIVE (AFU_ORTHOLOGUE AFUA_8G01420)-RELATED"/>
    <property type="match status" value="1"/>
</dbReference>
<dbReference type="Pfam" id="PF08240">
    <property type="entry name" value="ADH_N"/>
    <property type="match status" value="1"/>
</dbReference>
<dbReference type="SMART" id="SM00829">
    <property type="entry name" value="PKS_ER"/>
    <property type="match status" value="1"/>
</dbReference>
<dbReference type="SUPFAM" id="SSF50129">
    <property type="entry name" value="GroES-like"/>
    <property type="match status" value="1"/>
</dbReference>
<dbReference type="SUPFAM" id="SSF51735">
    <property type="entry name" value="NAD(P)-binding Rossmann-fold domains"/>
    <property type="match status" value="1"/>
</dbReference>
<evidence type="ECO:0000250" key="1">
    <source>
        <dbReference type="UniProtKB" id="Q9Y7D0"/>
    </source>
</evidence>
<evidence type="ECO:0000255" key="2"/>
<evidence type="ECO:0000269" key="3">
    <source>
    </source>
</evidence>
<evidence type="ECO:0000269" key="4">
    <source>
    </source>
</evidence>
<evidence type="ECO:0000303" key="5">
    <source>
    </source>
</evidence>
<evidence type="ECO:0000305" key="6"/>
<evidence type="ECO:0000305" key="7">
    <source>
    </source>
</evidence>
<comment type="function">
    <text evidence="3 4">Trans-enoyl reductase; part of the gene cluster that mediates the biosynthesis of fusarubins, highly pigmented naphthoquinones responsible for the coloration of the fruiting bodies (PubMed:22492438, PubMed:23825955). The non-reducing polyketide synthase FSR1 is responsible for the condensation of seven acetyl-CoA units to yield a haptaketide (PubMed:22492438). After rings A and B are formed by aldol-type cyclization, the PKS-derived product is released as 6-O-demethylfusarubinaldehyde (PubMed:22492438). Then, two hydroxyl groups at C-5 and C-10 are incorporated by FSR3, and simultaneously hydroxyl groups at C-6 and C-8 are methylated by FSR2 (PubMed:22492438). The aldehyde is, on the one hand, reduced by FSR3 to 8-O-methylfusarubin alcohol, which equilibrates mainly with 8-O-methylfusarubin and only small amounts of 8-O-methylnectriafurone (PubMed:22492438). On the other hand, the aldehyde can be oxidized to form 8-O-methylfusarubinic acid, a reaction driven by FSR3 equilibrating with 8-O-methylfusarubinlactone, finally resulting in 8-O-methylanhydrofusarubinlactol after a further reduction step and loss of water (PubMed:22492438). 8-O-Methylfusarubinic acid can also undergo decarboxylation, resulting in 8-O-methyl-13-hydroxynorjavanicin after another hydroxylation step at C-13 (PubMed:22492438). Both steps are most likely also accomplished by FSR3 (PubMed:22492438). No enzymatic function has been determined so far for either FSR4 and FSR5 (PubMed:22492438). Their deletion does not alter the product spectrum, but the possibility that they catalyze specific enzymatic steps during perithecium development cannot be ruled out (PubMed:22492438). FSR4 might possess a regulatory function in the biosynthesis of fusarubins (PubMed:22492438).</text>
</comment>
<comment type="induction">
    <text evidence="3">Expression is induced in presence of sodium nitrate, and repressed by glutamine (PubMed:22492438).</text>
</comment>
<comment type="disruption phenotype">
    <text evidence="3">Leads to an enriched product formation (PubMed:22492438).</text>
</comment>
<comment type="similarity">
    <text evidence="6">Belongs to the zinc-containing alcohol dehydrogenase family.</text>
</comment>
<proteinExistence type="evidence at transcript level"/>
<organism>
    <name type="scientific">Gibberella fujikuroi (strain CBS 195.34 / IMI 58289 / NRRL A-6831)</name>
    <name type="common">Bakanae and foot rot disease fungus</name>
    <name type="synonym">Fusarium fujikuroi</name>
    <dbReference type="NCBI Taxonomy" id="1279085"/>
    <lineage>
        <taxon>Eukaryota</taxon>
        <taxon>Fungi</taxon>
        <taxon>Dikarya</taxon>
        <taxon>Ascomycota</taxon>
        <taxon>Pezizomycotina</taxon>
        <taxon>Sordariomycetes</taxon>
        <taxon>Hypocreomycetidae</taxon>
        <taxon>Hypocreales</taxon>
        <taxon>Nectriaceae</taxon>
        <taxon>Fusarium</taxon>
        <taxon>Fusarium fujikuroi species complex</taxon>
    </lineage>
</organism>
<sequence length="338" mass="36985">MFSHLRNRLSVNRPQALSSQIRAASTMKEAIVSRGPRVHIIDSPIPKAGPGQVVVKIEYAGSNPKDWKRPEYWGSKATMNQGDDHSGTVYEVGEGVSDFKIGDRVAAMHEGKQPGGSYAEYGVSWAYTTIHLPEQTTFQEGAAIPFAAFTAACALYAKLDLPYPRHPVSDDQKIPLVIWGASSAVGSYAVQLAKKSNIHPLICIAGRAQEHVERMIDGSKGDIVIDYRKGHEAVAQKIKANLSGQKLEYAFDAVSEMGSYQTICDVLDQEIGKITLIIPAQSYSDIPKTIKKSVTTVASVHEDLKEFARGFSTYFGRGLQDGWLKAHPQEVVPGDWRG</sequence>
<feature type="chain" id="PRO_0000442027" description="Trans-enoyl reductase fsr4">
    <location>
        <begin position="1"/>
        <end position="338"/>
    </location>
</feature>
<feature type="binding site" evidence="1">
    <location>
        <begin position="65"/>
        <end position="68"/>
    </location>
    <ligand>
        <name>NADP(+)</name>
        <dbReference type="ChEBI" id="CHEBI:58349"/>
    </ligand>
</feature>
<feature type="binding site" evidence="2">
    <location>
        <begin position="147"/>
        <end position="153"/>
    </location>
    <ligand>
        <name>substrate</name>
    </ligand>
</feature>
<feature type="binding site" evidence="1">
    <location>
        <begin position="182"/>
        <end position="185"/>
    </location>
    <ligand>
        <name>NADP(+)</name>
        <dbReference type="ChEBI" id="CHEBI:58349"/>
    </ligand>
</feature>
<feature type="binding site" evidence="1">
    <location>
        <begin position="205"/>
        <end position="208"/>
    </location>
    <ligand>
        <name>NADP(+)</name>
        <dbReference type="ChEBI" id="CHEBI:58349"/>
    </ligand>
</feature>
<feature type="binding site" evidence="1">
    <location>
        <position position="227"/>
    </location>
    <ligand>
        <name>NADP(+)</name>
        <dbReference type="ChEBI" id="CHEBI:58349"/>
    </ligand>
</feature>
<feature type="binding site" evidence="1">
    <location>
        <begin position="277"/>
        <end position="278"/>
    </location>
    <ligand>
        <name>NADP(+)</name>
        <dbReference type="ChEBI" id="CHEBI:58349"/>
    </ligand>
</feature>
<keyword id="KW-0521">NADP</keyword>
<keyword id="KW-0547">Nucleotide-binding</keyword>
<keyword id="KW-0560">Oxidoreductase</keyword>
<keyword id="KW-1185">Reference proteome</keyword>